<sequence length="109" mass="12045">MLSVSRVASRMTGVVARFSTGGHGDGAGRGGGSGGSIRDAGGAFGKMEAAREDEYFYKKQKAQLEELRKHIQQEVDHHKSQLENHQKVLDRHQKRISEIEAEERALGKE</sequence>
<name>ATIF2_CAEBR</name>
<keyword id="KW-0175">Coiled coil</keyword>
<keyword id="KW-0496">Mitochondrion</keyword>
<keyword id="KW-1185">Reference proteome</keyword>
<keyword id="KW-0809">Transit peptide</keyword>
<feature type="transit peptide" description="Mitochondrion" evidence="1">
    <location>
        <begin position="1"/>
        <end status="unknown"/>
    </location>
</feature>
<feature type="chain" id="PRO_0000351212" description="ATPase inhibitor mai-2, mitochondrial">
    <location>
        <begin status="unknown"/>
        <end position="109"/>
    </location>
</feature>
<feature type="region of interest" description="Disordered" evidence="4">
    <location>
        <begin position="17"/>
        <end position="39"/>
    </location>
</feature>
<feature type="region of interest" description="Disordered" evidence="4">
    <location>
        <begin position="73"/>
        <end position="95"/>
    </location>
</feature>
<feature type="coiled-coil region" evidence="3">
    <location>
        <begin position="45"/>
        <end position="109"/>
    </location>
</feature>
<feature type="compositionally biased region" description="Gly residues" evidence="4">
    <location>
        <begin position="21"/>
        <end position="35"/>
    </location>
</feature>
<protein>
    <recommendedName>
        <fullName evidence="5">ATPase inhibitor mai-2, mitochondrial</fullName>
    </recommendedName>
    <alternativeName>
        <fullName evidence="2">ATP synthase F1 subunit epsilon</fullName>
    </alternativeName>
</protein>
<proteinExistence type="inferred from homology"/>
<gene>
    <name evidence="6" type="primary">mai-2</name>
    <name type="ORF">CBG21048</name>
</gene>
<organism>
    <name type="scientific">Caenorhabditis briggsae</name>
    <dbReference type="NCBI Taxonomy" id="6238"/>
    <lineage>
        <taxon>Eukaryota</taxon>
        <taxon>Metazoa</taxon>
        <taxon>Ecdysozoa</taxon>
        <taxon>Nematoda</taxon>
        <taxon>Chromadorea</taxon>
        <taxon>Rhabditida</taxon>
        <taxon>Rhabditina</taxon>
        <taxon>Rhabditomorpha</taxon>
        <taxon>Rhabditoidea</taxon>
        <taxon>Rhabditidae</taxon>
        <taxon>Peloderinae</taxon>
        <taxon>Caenorhabditis</taxon>
    </lineage>
</organism>
<accession>A8XZB0</accession>
<reference evidence="6" key="1">
    <citation type="journal article" date="2003" name="PLoS Biol.">
        <title>The genome sequence of Caenorhabditis briggsae: a platform for comparative genomics.</title>
        <authorList>
            <person name="Stein L.D."/>
            <person name="Bao Z."/>
            <person name="Blasiar D."/>
            <person name="Blumenthal T."/>
            <person name="Brent M.R."/>
            <person name="Chen N."/>
            <person name="Chinwalla A."/>
            <person name="Clarke L."/>
            <person name="Clee C."/>
            <person name="Coghlan A."/>
            <person name="Coulson A."/>
            <person name="D'Eustachio P."/>
            <person name="Fitch D.H.A."/>
            <person name="Fulton L.A."/>
            <person name="Fulton R.E."/>
            <person name="Griffiths-Jones S."/>
            <person name="Harris T.W."/>
            <person name="Hillier L.W."/>
            <person name="Kamath R."/>
            <person name="Kuwabara P.E."/>
            <person name="Mardis E.R."/>
            <person name="Marra M.A."/>
            <person name="Miner T.L."/>
            <person name="Minx P."/>
            <person name="Mullikin J.C."/>
            <person name="Plumb R.W."/>
            <person name="Rogers J."/>
            <person name="Schein J.E."/>
            <person name="Sohrmann M."/>
            <person name="Spieth J."/>
            <person name="Stajich J.E."/>
            <person name="Wei C."/>
            <person name="Willey D."/>
            <person name="Wilson R.K."/>
            <person name="Durbin R.M."/>
            <person name="Waterston R.H."/>
        </authorList>
    </citation>
    <scope>NUCLEOTIDE SEQUENCE [LARGE SCALE GENOMIC DNA]</scope>
    <source>
        <strain evidence="6">AF16</strain>
    </source>
</reference>
<evidence type="ECO:0000250" key="1">
    <source>
        <dbReference type="UniProtKB" id="O44441"/>
    </source>
</evidence>
<evidence type="ECO:0000250" key="2">
    <source>
        <dbReference type="UniProtKB" id="Q9UII2"/>
    </source>
</evidence>
<evidence type="ECO:0000255" key="3"/>
<evidence type="ECO:0000256" key="4">
    <source>
        <dbReference type="SAM" id="MobiDB-lite"/>
    </source>
</evidence>
<evidence type="ECO:0000305" key="5"/>
<evidence type="ECO:0000312" key="6">
    <source>
        <dbReference type="EMBL" id="CAP37977.1"/>
    </source>
</evidence>
<dbReference type="EMBL" id="HE601035">
    <property type="protein sequence ID" value="CAP37977.1"/>
    <property type="molecule type" value="Genomic_DNA"/>
</dbReference>
<dbReference type="SMR" id="A8XZB0"/>
<dbReference type="FunCoup" id="A8XZB0">
    <property type="interactions" value="1127"/>
</dbReference>
<dbReference type="STRING" id="6238.A8XZB0"/>
<dbReference type="EnsemblMetazoa" id="CBG21048.1">
    <property type="protein sequence ID" value="CBG21048.1"/>
    <property type="gene ID" value="WBGene00039929"/>
</dbReference>
<dbReference type="KEGG" id="cbr:CBG_21048"/>
<dbReference type="CTD" id="8576722"/>
<dbReference type="WormBase" id="CBG21048">
    <property type="protein sequence ID" value="CBP05003"/>
    <property type="gene ID" value="WBGene00039929"/>
    <property type="gene designation" value="Cbr-mai-2"/>
</dbReference>
<dbReference type="eggNOG" id="ENOG502S8MH">
    <property type="taxonomic scope" value="Eukaryota"/>
</dbReference>
<dbReference type="HOGENOM" id="CLU_147479_1_2_1"/>
<dbReference type="InParanoid" id="A8XZB0"/>
<dbReference type="OMA" id="QEVDHHK"/>
<dbReference type="Proteomes" id="UP000008549">
    <property type="component" value="Unassembled WGS sequence"/>
</dbReference>
<dbReference type="GO" id="GO:0005739">
    <property type="term" value="C:mitochondrion"/>
    <property type="evidence" value="ECO:0000318"/>
    <property type="project" value="GO_Central"/>
</dbReference>
<dbReference type="GO" id="GO:0042030">
    <property type="term" value="F:ATPase inhibitor activity"/>
    <property type="evidence" value="ECO:0000318"/>
    <property type="project" value="GO_Central"/>
</dbReference>
<dbReference type="FunFam" id="1.20.5.500:FF:000007">
    <property type="entry name" value="ATPase inhibitor, putative"/>
    <property type="match status" value="1"/>
</dbReference>
<dbReference type="Gene3D" id="1.20.5.500">
    <property type="entry name" value="Single helix bin"/>
    <property type="match status" value="1"/>
</dbReference>
<dbReference type="InterPro" id="IPR007648">
    <property type="entry name" value="ATPase_inhibitor_mt"/>
</dbReference>
<dbReference type="PANTHER" id="PTHR48417">
    <property type="entry name" value="ATP SYNTHASE F1 SUBUNIT EPSILON"/>
    <property type="match status" value="1"/>
</dbReference>
<dbReference type="PANTHER" id="PTHR48417:SF1">
    <property type="entry name" value="ATP SYNTHASE F1 SUBUNIT EPSILON"/>
    <property type="match status" value="1"/>
</dbReference>
<dbReference type="Pfam" id="PF04568">
    <property type="entry name" value="IATP"/>
    <property type="match status" value="1"/>
</dbReference>
<dbReference type="SUPFAM" id="SSF64602">
    <property type="entry name" value="F1 ATPase inhibitor, IF1, C-terminal domain"/>
    <property type="match status" value="1"/>
</dbReference>
<comment type="function">
    <text evidence="1">Thought to be a regulatory component of the ATP-synthesizing complex in the mitochondria.</text>
</comment>
<comment type="subcellular location">
    <subcellularLocation>
        <location evidence="3">Mitochondrion</location>
    </subcellularLocation>
</comment>
<comment type="similarity">
    <text evidence="3">Belongs to the ATPase inhibitor family.</text>
</comment>